<feature type="chain" id="PRO_1000097051" description="Pantothenate synthetase">
    <location>
        <begin position="1"/>
        <end position="281"/>
    </location>
</feature>
<feature type="active site" description="Proton donor" evidence="1">
    <location>
        <position position="37"/>
    </location>
</feature>
<feature type="binding site" evidence="1">
    <location>
        <begin position="30"/>
        <end position="37"/>
    </location>
    <ligand>
        <name>ATP</name>
        <dbReference type="ChEBI" id="CHEBI:30616"/>
    </ligand>
</feature>
<feature type="binding site" evidence="1">
    <location>
        <position position="61"/>
    </location>
    <ligand>
        <name>(R)-pantoate</name>
        <dbReference type="ChEBI" id="CHEBI:15980"/>
    </ligand>
</feature>
<feature type="binding site" evidence="1">
    <location>
        <position position="61"/>
    </location>
    <ligand>
        <name>beta-alanine</name>
        <dbReference type="ChEBI" id="CHEBI:57966"/>
    </ligand>
</feature>
<feature type="binding site" evidence="1">
    <location>
        <begin position="147"/>
        <end position="150"/>
    </location>
    <ligand>
        <name>ATP</name>
        <dbReference type="ChEBI" id="CHEBI:30616"/>
    </ligand>
</feature>
<feature type="binding site" evidence="1">
    <location>
        <position position="153"/>
    </location>
    <ligand>
        <name>(R)-pantoate</name>
        <dbReference type="ChEBI" id="CHEBI:15980"/>
    </ligand>
</feature>
<feature type="binding site" evidence="1">
    <location>
        <position position="176"/>
    </location>
    <ligand>
        <name>ATP</name>
        <dbReference type="ChEBI" id="CHEBI:30616"/>
    </ligand>
</feature>
<feature type="binding site" evidence="1">
    <location>
        <begin position="184"/>
        <end position="187"/>
    </location>
    <ligand>
        <name>ATP</name>
        <dbReference type="ChEBI" id="CHEBI:30616"/>
    </ligand>
</feature>
<dbReference type="EC" id="6.3.2.1" evidence="1"/>
<dbReference type="EMBL" id="CP000962">
    <property type="protein sequence ID" value="ACA56426.1"/>
    <property type="molecule type" value="Genomic_DNA"/>
</dbReference>
<dbReference type="RefSeq" id="WP_012344299.1">
    <property type="nucleotide sequence ID" value="NC_010520.1"/>
</dbReference>
<dbReference type="SMR" id="B1KUY6"/>
<dbReference type="KEGG" id="cbl:CLK_3626"/>
<dbReference type="HOGENOM" id="CLU_047148_0_0_9"/>
<dbReference type="UniPathway" id="UPA00028">
    <property type="reaction ID" value="UER00005"/>
</dbReference>
<dbReference type="GO" id="GO:0005829">
    <property type="term" value="C:cytosol"/>
    <property type="evidence" value="ECO:0007669"/>
    <property type="project" value="TreeGrafter"/>
</dbReference>
<dbReference type="GO" id="GO:0005524">
    <property type="term" value="F:ATP binding"/>
    <property type="evidence" value="ECO:0007669"/>
    <property type="project" value="UniProtKB-KW"/>
</dbReference>
<dbReference type="GO" id="GO:0004592">
    <property type="term" value="F:pantoate-beta-alanine ligase activity"/>
    <property type="evidence" value="ECO:0007669"/>
    <property type="project" value="UniProtKB-UniRule"/>
</dbReference>
<dbReference type="GO" id="GO:0015940">
    <property type="term" value="P:pantothenate biosynthetic process"/>
    <property type="evidence" value="ECO:0007669"/>
    <property type="project" value="UniProtKB-UniRule"/>
</dbReference>
<dbReference type="CDD" id="cd00560">
    <property type="entry name" value="PanC"/>
    <property type="match status" value="1"/>
</dbReference>
<dbReference type="FunFam" id="3.30.1300.10:FF:000001">
    <property type="entry name" value="Pantothenate synthetase"/>
    <property type="match status" value="1"/>
</dbReference>
<dbReference type="FunFam" id="3.40.50.620:FF:000013">
    <property type="entry name" value="Pantothenate synthetase"/>
    <property type="match status" value="1"/>
</dbReference>
<dbReference type="Gene3D" id="3.40.50.620">
    <property type="entry name" value="HUPs"/>
    <property type="match status" value="1"/>
</dbReference>
<dbReference type="Gene3D" id="3.30.1300.10">
    <property type="entry name" value="Pantoate-beta-alanine ligase, C-terminal domain"/>
    <property type="match status" value="1"/>
</dbReference>
<dbReference type="HAMAP" id="MF_00158">
    <property type="entry name" value="PanC"/>
    <property type="match status" value="1"/>
</dbReference>
<dbReference type="InterPro" id="IPR004821">
    <property type="entry name" value="Cyt_trans-like"/>
</dbReference>
<dbReference type="InterPro" id="IPR003721">
    <property type="entry name" value="Pantoate_ligase"/>
</dbReference>
<dbReference type="InterPro" id="IPR042176">
    <property type="entry name" value="Pantoate_ligase_C"/>
</dbReference>
<dbReference type="InterPro" id="IPR014729">
    <property type="entry name" value="Rossmann-like_a/b/a_fold"/>
</dbReference>
<dbReference type="NCBIfam" id="TIGR00125">
    <property type="entry name" value="cyt_tran_rel"/>
    <property type="match status" value="1"/>
</dbReference>
<dbReference type="NCBIfam" id="TIGR00018">
    <property type="entry name" value="panC"/>
    <property type="match status" value="1"/>
</dbReference>
<dbReference type="PANTHER" id="PTHR21299">
    <property type="entry name" value="CYTIDYLATE KINASE/PANTOATE-BETA-ALANINE LIGASE"/>
    <property type="match status" value="1"/>
</dbReference>
<dbReference type="PANTHER" id="PTHR21299:SF1">
    <property type="entry name" value="PANTOATE--BETA-ALANINE LIGASE"/>
    <property type="match status" value="1"/>
</dbReference>
<dbReference type="Pfam" id="PF02569">
    <property type="entry name" value="Pantoate_ligase"/>
    <property type="match status" value="1"/>
</dbReference>
<dbReference type="SUPFAM" id="SSF52374">
    <property type="entry name" value="Nucleotidylyl transferase"/>
    <property type="match status" value="1"/>
</dbReference>
<organism>
    <name type="scientific">Clostridium botulinum (strain Loch Maree / Type A3)</name>
    <dbReference type="NCBI Taxonomy" id="498214"/>
    <lineage>
        <taxon>Bacteria</taxon>
        <taxon>Bacillati</taxon>
        <taxon>Bacillota</taxon>
        <taxon>Clostridia</taxon>
        <taxon>Eubacteriales</taxon>
        <taxon>Clostridiaceae</taxon>
        <taxon>Clostridium</taxon>
    </lineage>
</organism>
<reference key="1">
    <citation type="journal article" date="2007" name="PLoS ONE">
        <title>Analysis of the neurotoxin complex genes in Clostridium botulinum A1-A4 and B1 strains: BoNT/A3, /Ba4 and /B1 clusters are located within plasmids.</title>
        <authorList>
            <person name="Smith T.J."/>
            <person name="Hill K.K."/>
            <person name="Foley B.T."/>
            <person name="Detter J.C."/>
            <person name="Munk A.C."/>
            <person name="Bruce D.C."/>
            <person name="Doggett N.A."/>
            <person name="Smith L.A."/>
            <person name="Marks J.D."/>
            <person name="Xie G."/>
            <person name="Brettin T.S."/>
        </authorList>
    </citation>
    <scope>NUCLEOTIDE SEQUENCE [LARGE SCALE GENOMIC DNA]</scope>
    <source>
        <strain>Loch Maree / Type A3</strain>
    </source>
</reference>
<protein>
    <recommendedName>
        <fullName evidence="1">Pantothenate synthetase</fullName>
        <shortName evidence="1">PS</shortName>
        <ecNumber evidence="1">6.3.2.1</ecNumber>
    </recommendedName>
    <alternativeName>
        <fullName evidence="1">Pantoate--beta-alanine ligase</fullName>
    </alternativeName>
    <alternativeName>
        <fullName evidence="1">Pantoate-activating enzyme</fullName>
    </alternativeName>
</protein>
<gene>
    <name evidence="1" type="primary">panC</name>
    <name type="ordered locus">CLK_3626</name>
</gene>
<sequence length="281" mass="31899">MNIVHTIKDVKSIIKKWKDENLSIGYVPTMGYLHEGHASLIKKAREENDKVIVSIFVNPIQFGPKEDYSTYPRDLDKDSSLCEKFGADLVFNPETSEMYPNKIYSHVNVDILTENLCGEKRPVHFQGVCTVLTKFFNILNPTKAYFGEKDAQQLTVVKKMVEDLNFPIEIIGCPIIREEDGLAKSSRNAYLNKQERKSALILNKSLKEALKSLKSGEKDLNIIKNIIINTIMKEPLAKIDYISIVDSTTLQPVEKLQSSILIAIAVYIGKTRLIDNFTFKL</sequence>
<name>PANC_CLOBM</name>
<accession>B1KUY6</accession>
<comment type="function">
    <text evidence="1">Catalyzes the condensation of pantoate with beta-alanine in an ATP-dependent reaction via a pantoyl-adenylate intermediate.</text>
</comment>
<comment type="catalytic activity">
    <reaction evidence="1">
        <text>(R)-pantoate + beta-alanine + ATP = (R)-pantothenate + AMP + diphosphate + H(+)</text>
        <dbReference type="Rhea" id="RHEA:10912"/>
        <dbReference type="ChEBI" id="CHEBI:15378"/>
        <dbReference type="ChEBI" id="CHEBI:15980"/>
        <dbReference type="ChEBI" id="CHEBI:29032"/>
        <dbReference type="ChEBI" id="CHEBI:30616"/>
        <dbReference type="ChEBI" id="CHEBI:33019"/>
        <dbReference type="ChEBI" id="CHEBI:57966"/>
        <dbReference type="ChEBI" id="CHEBI:456215"/>
        <dbReference type="EC" id="6.3.2.1"/>
    </reaction>
</comment>
<comment type="pathway">
    <text evidence="1">Cofactor biosynthesis; (R)-pantothenate biosynthesis; (R)-pantothenate from (R)-pantoate and beta-alanine: step 1/1.</text>
</comment>
<comment type="subunit">
    <text evidence="1">Homodimer.</text>
</comment>
<comment type="subcellular location">
    <subcellularLocation>
        <location evidence="1">Cytoplasm</location>
    </subcellularLocation>
</comment>
<comment type="miscellaneous">
    <text evidence="1">The reaction proceeds by a bi uni uni bi ping pong mechanism.</text>
</comment>
<comment type="similarity">
    <text evidence="1">Belongs to the pantothenate synthetase family.</text>
</comment>
<evidence type="ECO:0000255" key="1">
    <source>
        <dbReference type="HAMAP-Rule" id="MF_00158"/>
    </source>
</evidence>
<keyword id="KW-0067">ATP-binding</keyword>
<keyword id="KW-0963">Cytoplasm</keyword>
<keyword id="KW-0436">Ligase</keyword>
<keyword id="KW-0547">Nucleotide-binding</keyword>
<keyword id="KW-0566">Pantothenate biosynthesis</keyword>
<proteinExistence type="inferred from homology"/>